<proteinExistence type="evidence at protein level"/>
<name>ESTD_THEMA</name>
<evidence type="ECO:0000255" key="1"/>
<evidence type="ECO:0000269" key="2">
    <source>
    </source>
</evidence>
<evidence type="ECO:0000303" key="3">
    <source>
    </source>
</evidence>
<evidence type="ECO:0000305" key="4">
    <source>
    </source>
</evidence>
<evidence type="ECO:0000312" key="5">
    <source>
        <dbReference type="EMBL" id="AAD35423.1"/>
    </source>
</evidence>
<evidence type="ECO:0000312" key="6">
    <source>
        <dbReference type="EMBL" id="AGL49259.1"/>
    </source>
</evidence>
<evidence type="ECO:0000312" key="7">
    <source>
        <dbReference type="EMBL" id="AHD17901.1"/>
    </source>
</evidence>
<sequence>MRLTVFLSLFLGVMVFGAFDQEAFLFVQHLTSENFESALNMCSNQVKAQLSVQSLSNIWNSLKAQLSDFREIAGYEKIIQAEYEIYNFTLKFDRGEISALVTMDREGKVAGLFFKQATKTEYELPDYVDPESFEEKDITVNGLPGKITIPKGSGPFPAVVLVHGSGPNDMDETIGPNKIFKDIAYGLSSKGIIVLRYHKRTFVEKVDPTTLTVEKEVIEDALEAVKILKERKDVSRVYVLGHSLGAMLTPEIAERSKADGVVMIAPPARPLEEVMEDQLKYLQSLGLASNVEETLNILEKLKRKEIPPDEFVLGAPAKYFYDLRERDPASIAKRLTIPMLLIFGGRDYQVTEKDQEIWLKELSGRENVKILVFDDLNHLMISGEGKSTPVEYMKKGHVDKRVIDEIARWMVK</sequence>
<protein>
    <recommendedName>
        <fullName evidence="7">Esterase EstD</fullName>
        <ecNumber evidence="2">3.1.1.1</ecNumber>
    </recommendedName>
</protein>
<accession>Q9WYH1</accession>
<accession>G4FHP9</accession>
<reference key="1">
    <citation type="journal article" date="1999" name="Nature">
        <title>Evidence for lateral gene transfer between Archaea and Bacteria from genome sequence of Thermotoga maritima.</title>
        <authorList>
            <person name="Nelson K.E."/>
            <person name="Clayton R.A."/>
            <person name="Gill S.R."/>
            <person name="Gwinn M.L."/>
            <person name="Dodson R.J."/>
            <person name="Haft D.H."/>
            <person name="Hickey E.K."/>
            <person name="Peterson J.D."/>
            <person name="Nelson W.C."/>
            <person name="Ketchum K.A."/>
            <person name="McDonald L.A."/>
            <person name="Utterback T.R."/>
            <person name="Malek J.A."/>
            <person name="Linher K.D."/>
            <person name="Garrett M.M."/>
            <person name="Stewart A.M."/>
            <person name="Cotton M.D."/>
            <person name="Pratt M.S."/>
            <person name="Phillips C.A."/>
            <person name="Richardson D.L."/>
            <person name="Heidelberg J.F."/>
            <person name="Sutton G.G."/>
            <person name="Fleischmann R.D."/>
            <person name="Eisen J.A."/>
            <person name="White O."/>
            <person name="Salzberg S.L."/>
            <person name="Smith H.O."/>
            <person name="Venter J.C."/>
            <person name="Fraser C.M."/>
        </authorList>
    </citation>
    <scope>NUCLEOTIDE SEQUENCE [LARGE SCALE GENOMIC DNA]</scope>
    <source>
        <strain>ATCC 43589 / DSM 3109 / JCM 10099 / NBRC 100826 / MSB8</strain>
    </source>
</reference>
<reference key="2">
    <citation type="journal article" date="2013" name="PLoS Genet.">
        <title>The genome organization of Thermotoga maritima reflects its lifestyle.</title>
        <authorList>
            <person name="Latif H."/>
            <person name="Lerman J.A."/>
            <person name="Portnoy V.A."/>
            <person name="Tarasova Y."/>
            <person name="Nagarajan H."/>
            <person name="Schrimpe-Rutledge A.C."/>
            <person name="Smith R.D."/>
            <person name="Adkins J.N."/>
            <person name="Lee D.H."/>
            <person name="Qiu Y."/>
            <person name="Zengler K."/>
        </authorList>
    </citation>
    <scope>NUCLEOTIDE SEQUENCE [LARGE SCALE GENOMIC DNA]</scope>
    <source>
        <strain>ATCC 43589 / DSM 3109 / JCM 10099 / NBRC 100826 / MSB8</strain>
    </source>
</reference>
<reference key="3">
    <citation type="submission" date="2013-12" db="EMBL/GenBank/DDBJ databases">
        <authorList>
            <consortium name="DOE Joint Genome Institute"/>
            <person name="Noll K.M."/>
            <person name="Huntemann M."/>
            <person name="Han J."/>
            <person name="Chen A."/>
            <person name="Kyrpides N."/>
            <person name="Mavromatis K."/>
            <person name="Markowitz V."/>
            <person name="Palaniappan K."/>
            <person name="Ivanova N."/>
            <person name="Schaumberg A."/>
            <person name="Pati A."/>
            <person name="Liolios K."/>
            <person name="Nordberg H.P."/>
            <person name="Cantor M.N."/>
            <person name="Hua S.X."/>
            <person name="Woyke T."/>
        </authorList>
    </citation>
    <scope>NUCLEOTIDE SEQUENCE [LARGE SCALE GENOMIC DNA]</scope>
    <source>
        <strain>ATCC 43589 / DSM 3109 / JCM 10099 / NBRC 100826 / MSB8</strain>
    </source>
</reference>
<reference key="4">
    <citation type="journal article" date="2007" name="FEBS J.">
        <title>Characterization and structural modeling of a new type of thermostable esterase from Thermotoga maritima.</title>
        <authorList>
            <person name="Levisson M."/>
            <person name="van der Oost J."/>
            <person name="Kengen S.W."/>
        </authorList>
    </citation>
    <scope>FUNCTION</scope>
    <scope>CATALYTIC ACTIVITY</scope>
    <scope>SUBSTRATE SPECIFICITY</scope>
    <scope>BIOPHYSICOCHEMICAL PROPERTIES</scope>
    <scope>ACTIVITY REGULATION</scope>
    <scope>SUBUNIT</scope>
    <scope>3D-STRUCTURE MODELING</scope>
    <scope>MUTAGENESIS OF SER-243; ASP-347 AND HIS-378</scope>
    <scope>ACTIVE SITE</scope>
    <scope>BIOTECHNOLOGY</scope>
</reference>
<feature type="signal peptide" evidence="1">
    <location>
        <begin position="1"/>
        <end position="20"/>
    </location>
</feature>
<feature type="chain" id="PRO_0000432501" description="Esterase EstD">
    <location>
        <begin position="21"/>
        <end position="412"/>
    </location>
</feature>
<feature type="active site" description="Nucleophile" evidence="4">
    <location>
        <position position="243"/>
    </location>
</feature>
<feature type="active site" description="Charge relay system" evidence="4">
    <location>
        <position position="347"/>
    </location>
</feature>
<feature type="active site" description="Charge relay system" evidence="4">
    <location>
        <position position="378"/>
    </location>
</feature>
<feature type="mutagenesis site" description="Loss of enzymatic activity." evidence="2">
    <original>S</original>
    <variation>A</variation>
    <location>
        <position position="243"/>
    </location>
</feature>
<feature type="mutagenesis site" description="Loss of enzymatic activity." evidence="2">
    <original>D</original>
    <variation>N</variation>
    <location>
        <position position="347"/>
    </location>
</feature>
<feature type="mutagenesis site" description="Loss of enzymatic activity." evidence="2">
    <original>H</original>
    <variation>N</variation>
    <location>
        <position position="378"/>
    </location>
</feature>
<organism>
    <name type="scientific">Thermotoga maritima (strain ATCC 43589 / DSM 3109 / JCM 10099 / NBRC 100826 / MSB8)</name>
    <dbReference type="NCBI Taxonomy" id="243274"/>
    <lineage>
        <taxon>Bacteria</taxon>
        <taxon>Thermotogati</taxon>
        <taxon>Thermotogota</taxon>
        <taxon>Thermotogae</taxon>
        <taxon>Thermotogales</taxon>
        <taxon>Thermotogaceae</taxon>
        <taxon>Thermotoga</taxon>
    </lineage>
</organism>
<comment type="function">
    <text evidence="2">Exhibits significant esterase activity with a preference for short acyl chain esters (C4-C8) in vitro. Its physiological function is not known. Displays neither proteolytic activity using casein as substrate, nor peptidase activity when assayed with L-leucine p-nitroanilide and L-proline p-nitroanilide.</text>
</comment>
<comment type="catalytic activity">
    <reaction evidence="2">
        <text>a carboxylic ester + H2O = an alcohol + a carboxylate + H(+)</text>
        <dbReference type="Rhea" id="RHEA:21164"/>
        <dbReference type="ChEBI" id="CHEBI:15377"/>
        <dbReference type="ChEBI" id="CHEBI:15378"/>
        <dbReference type="ChEBI" id="CHEBI:29067"/>
        <dbReference type="ChEBI" id="CHEBI:30879"/>
        <dbReference type="ChEBI" id="CHEBI:33308"/>
        <dbReference type="EC" id="3.1.1.1"/>
    </reaction>
</comment>
<comment type="activity regulation">
    <text evidence="2">Is strongly inhibited by phenylmethylsulfonyl fluoride, a serine protease inhibitor, and by mercury chloride. Diethyl pyrocarbonate, a histidine modifier, also inhibits the reaction, albeit less pronounced than phenylmethylsulfonyl fluoride. EDTA and dithiothreitol have no effect on enzyme activity.</text>
</comment>
<comment type="biophysicochemical properties">
    <kinetics>
        <KM evidence="2">148 uM for pNP-acetate (at pH 7 and 70 degrees Celsius)</KM>
        <KM evidence="2">227 uM for pNP-butyrate (at pH 7 and 70 degrees Celsius)</KM>
        <KM evidence="2">66 uM for pNP-valerate (at pH 7 and 70 degrees Celsius)</KM>
        <KM evidence="2">11 uM for pNP-octanoate (at pH 7 and 70 degrees Celsius)</KM>
        <KM evidence="2">72 uM for pNP-decanoate (at pH 7 and 70 degrees Celsius)</KM>
        <text evidence="2">kcat is 1.0 sec(-1) with pNP-acetate as substrate. kcat is 14.9 sec(-1) with pNP-butyrate as substrate. kcat is 10.2 sec(-1) with pNP-valerate as substrate. kcat is 1.6 sec(-1) with pNP-octanoate as substrate. kcat is 1.3 sec(-1) with pNP-decanoate as substrate (at pH 7 and 70 degrees Celsius).</text>
    </kinetics>
    <phDependence>
        <text evidence="2">Optimum pH is 7.</text>
    </phDependence>
    <temperatureDependence>
        <text evidence="2">Optimum temperature is around 95 degrees Celsius. Shows &gt;70% of its maximal activity in the pH range of 5-9. Displays a relatively high thermostability with a half-life of 1 hour at 100 degrees Celsius.</text>
    </temperatureDependence>
</comment>
<comment type="subunit">
    <text evidence="2">Exists mainly as a monomer and, to some extent as a dimer.</text>
</comment>
<comment type="biotechnology">
    <text evidence="4">The high thermal stability and activity in the presence of organic solvents makes EstD an attractive catalyst for future applications in industry.</text>
</comment>
<comment type="similarity">
    <text evidence="4">Belongs to the AB hydrolase superfamily. Esterase 10 family.</text>
</comment>
<gene>
    <name evidence="3" type="primary">estD</name>
    <name evidence="5" type="ordered locus">TM_0336</name>
    <name evidence="7" type="ORF">THEMA_03040</name>
    <name evidence="6" type="ORF">Tmari_0334</name>
</gene>
<keyword id="KW-0378">Hydrolase</keyword>
<keyword id="KW-1185">Reference proteome</keyword>
<keyword id="KW-0719">Serine esterase</keyword>
<keyword id="KW-0732">Signal</keyword>
<dbReference type="EC" id="3.1.1.1" evidence="2"/>
<dbReference type="EMBL" id="AE000512">
    <property type="protein sequence ID" value="AAD35423.1"/>
    <property type="molecule type" value="Genomic_DNA"/>
</dbReference>
<dbReference type="EMBL" id="CP004077">
    <property type="protein sequence ID" value="AGL49259.1"/>
    <property type="molecule type" value="Genomic_DNA"/>
</dbReference>
<dbReference type="EMBL" id="CP007013">
    <property type="protein sequence ID" value="AHD17901.1"/>
    <property type="molecule type" value="Genomic_DNA"/>
</dbReference>
<dbReference type="PIR" id="B72391">
    <property type="entry name" value="B72391"/>
</dbReference>
<dbReference type="RefSeq" id="NP_228147.1">
    <property type="nucleotide sequence ID" value="NC_000853.1"/>
</dbReference>
<dbReference type="RefSeq" id="WP_004083104.1">
    <property type="nucleotide sequence ID" value="NZ_CP011107.1"/>
</dbReference>
<dbReference type="SMR" id="Q9WYH1"/>
<dbReference type="STRING" id="243274.TM_0336"/>
<dbReference type="ESTHER" id="thema-TM0336">
    <property type="family name" value="Bacterial_EstLip_FamX"/>
</dbReference>
<dbReference type="PaxDb" id="243274-THEMA_03040"/>
<dbReference type="EnsemblBacteria" id="AAD35423">
    <property type="protein sequence ID" value="AAD35423"/>
    <property type="gene ID" value="TM_0336"/>
</dbReference>
<dbReference type="KEGG" id="tma:TM0336"/>
<dbReference type="KEGG" id="tmi:THEMA_03040"/>
<dbReference type="KEGG" id="tmm:Tmari_0334"/>
<dbReference type="KEGG" id="tmw:THMA_0344"/>
<dbReference type="PATRIC" id="fig|243274.17.peg.333"/>
<dbReference type="eggNOG" id="COG1073">
    <property type="taxonomic scope" value="Bacteria"/>
</dbReference>
<dbReference type="InParanoid" id="Q9WYH1"/>
<dbReference type="OrthoDB" id="9809549at2"/>
<dbReference type="Proteomes" id="UP000008183">
    <property type="component" value="Chromosome"/>
</dbReference>
<dbReference type="GO" id="GO:0106435">
    <property type="term" value="F:carboxylesterase activity"/>
    <property type="evidence" value="ECO:0000314"/>
    <property type="project" value="UniProtKB"/>
</dbReference>
<dbReference type="GO" id="GO:0052689">
    <property type="term" value="F:carboxylic ester hydrolase activity"/>
    <property type="evidence" value="ECO:0000318"/>
    <property type="project" value="GO_Central"/>
</dbReference>
<dbReference type="Gene3D" id="3.10.450.590">
    <property type="match status" value="1"/>
</dbReference>
<dbReference type="Gene3D" id="3.40.50.1820">
    <property type="entry name" value="alpha/beta hydrolase"/>
    <property type="match status" value="1"/>
</dbReference>
<dbReference type="InterPro" id="IPR053145">
    <property type="entry name" value="AB_hydrolase_Est10"/>
</dbReference>
<dbReference type="InterPro" id="IPR029058">
    <property type="entry name" value="AB_hydrolase_fold"/>
</dbReference>
<dbReference type="InterPro" id="IPR024981">
    <property type="entry name" value="DUF3887"/>
</dbReference>
<dbReference type="InterPro" id="IPR054995">
    <property type="entry name" value="Esterase_EstD"/>
</dbReference>
<dbReference type="InterPro" id="IPR022742">
    <property type="entry name" value="Hydrolase_4"/>
</dbReference>
<dbReference type="NCBIfam" id="NF041096">
    <property type="entry name" value="esterase_EstD"/>
    <property type="match status" value="1"/>
</dbReference>
<dbReference type="PANTHER" id="PTHR43265">
    <property type="entry name" value="ESTERASE ESTD"/>
    <property type="match status" value="1"/>
</dbReference>
<dbReference type="PANTHER" id="PTHR43265:SF1">
    <property type="entry name" value="ESTERASE ESTD"/>
    <property type="match status" value="1"/>
</dbReference>
<dbReference type="Pfam" id="PF13026">
    <property type="entry name" value="DUF3887"/>
    <property type="match status" value="1"/>
</dbReference>
<dbReference type="Pfam" id="PF12146">
    <property type="entry name" value="Hydrolase_4"/>
    <property type="match status" value="1"/>
</dbReference>
<dbReference type="SUPFAM" id="SSF53474">
    <property type="entry name" value="alpha/beta-Hydrolases"/>
    <property type="match status" value="1"/>
</dbReference>
<dbReference type="PROSITE" id="PS00120">
    <property type="entry name" value="LIPASE_SER"/>
    <property type="match status" value="1"/>
</dbReference>